<feature type="peptide" id="PRO_0000044348" description="Pyrokinin-5">
    <location>
        <begin position="1"/>
        <end position="17"/>
    </location>
</feature>
<feature type="modified residue" description="Leucine amide" evidence="3 4">
    <location>
        <position position="17"/>
    </location>
</feature>
<evidence type="ECO:0000250" key="1">
    <source>
        <dbReference type="UniProtKB" id="P84594"/>
    </source>
</evidence>
<evidence type="ECO:0000255" key="2"/>
<evidence type="ECO:0000269" key="3">
    <source>
    </source>
</evidence>
<evidence type="ECO:0000269" key="4">
    <source ref="2"/>
</evidence>
<evidence type="ECO:0000305" key="5"/>
<reference key="1">
    <citation type="journal article" date="2009" name="BMC Evol. Biol.">
        <title>A proteomic approach for studying insect phylogeny: CAPA peptides of ancient insect taxa (Dictyoptera, Blattoptera) as a test case.</title>
        <authorList>
            <person name="Roth S."/>
            <person name="Fromm B."/>
            <person name="Gaede G."/>
            <person name="Predel R."/>
        </authorList>
    </citation>
    <scope>PROTEIN SEQUENCE</scope>
    <scope>AMIDATION AT LEU-17</scope>
    <source>
        <tissue>Abdominal perisympathetic organs</tissue>
    </source>
</reference>
<reference evidence="5" key="2">
    <citation type="submission" date="2005-09" db="UniProtKB">
        <authorList>
            <person name="Predel R."/>
        </authorList>
    </citation>
    <scope>PROTEIN SEQUENCE</scope>
    <scope>TISSUE SPECIFICITY</scope>
    <scope>MASS SPECTROMETRY</scope>
    <scope>AMIDATION AT LEU-17</scope>
    <source>
        <tissue>Abdominal perisympathetic organs</tissue>
    </source>
</reference>
<keyword id="KW-0027">Amidation</keyword>
<keyword id="KW-0903">Direct protein sequencing</keyword>
<keyword id="KW-0527">Neuropeptide</keyword>
<keyword id="KW-0964">Secreted</keyword>
<organism>
    <name type="scientific">Panchlora viridis</name>
    <name type="common">Cockroach</name>
    <dbReference type="NCBI Taxonomy" id="344693"/>
    <lineage>
        <taxon>Eukaryota</taxon>
        <taxon>Metazoa</taxon>
        <taxon>Ecdysozoa</taxon>
        <taxon>Arthropoda</taxon>
        <taxon>Hexapoda</taxon>
        <taxon>Insecta</taxon>
        <taxon>Pterygota</taxon>
        <taxon>Neoptera</taxon>
        <taxon>Polyneoptera</taxon>
        <taxon>Dictyoptera</taxon>
        <taxon>Blattodea</taxon>
        <taxon>Blaberoidea</taxon>
        <taxon>Blaberidae</taxon>
        <taxon>Panchlorinae</taxon>
        <taxon>Panchlora</taxon>
    </lineage>
</organism>
<comment type="function">
    <text evidence="1">Myoactive.</text>
</comment>
<comment type="subcellular location">
    <subcellularLocation>
        <location evidence="5">Secreted</location>
    </subcellularLocation>
</comment>
<comment type="tissue specificity">
    <text evidence="4">Expressed in abdominal perisympathetic organs and abdominal ganglia.</text>
</comment>
<comment type="mass spectrometry">
    <text>With amidation.</text>
</comment>
<comment type="similarity">
    <text evidence="2">Belongs to the pyrokinin family.</text>
</comment>
<proteinExistence type="evidence at protein level"/>
<name>PPK5_PANVI</name>
<protein>
    <recommendedName>
        <fullName>Pyrokinin-5</fullName>
        <shortName>Panvi-PK-5</shortName>
    </recommendedName>
    <alternativeName>
        <fullName>FXPRL-amide</fullName>
    </alternativeName>
    <alternativeName>
        <fullName>PanVi-Capa-PK</fullName>
    </alternativeName>
</protein>
<accession>P84670</accession>
<sequence>GGETGSDAKAMWFGPRL</sequence>
<dbReference type="GO" id="GO:0005576">
    <property type="term" value="C:extracellular region"/>
    <property type="evidence" value="ECO:0007669"/>
    <property type="project" value="UniProtKB-SubCell"/>
</dbReference>
<dbReference type="GO" id="GO:0005184">
    <property type="term" value="F:neuropeptide hormone activity"/>
    <property type="evidence" value="ECO:0007669"/>
    <property type="project" value="InterPro"/>
</dbReference>
<dbReference type="GO" id="GO:0007218">
    <property type="term" value="P:neuropeptide signaling pathway"/>
    <property type="evidence" value="ECO:0007669"/>
    <property type="project" value="UniProtKB-KW"/>
</dbReference>
<dbReference type="InterPro" id="IPR001484">
    <property type="entry name" value="Pyrokinin_CS"/>
</dbReference>
<dbReference type="PROSITE" id="PS00539">
    <property type="entry name" value="PYROKININ"/>
    <property type="match status" value="1"/>
</dbReference>